<feature type="chain" id="PRO_1000129483" description="Nicotinate phosphoribosyltransferase">
    <location>
        <begin position="1"/>
        <end position="400"/>
    </location>
</feature>
<feature type="modified residue" description="Phosphohistidine; by autocatalysis" evidence="1">
    <location>
        <position position="220"/>
    </location>
</feature>
<proteinExistence type="inferred from homology"/>
<gene>
    <name evidence="1" type="primary">pncB</name>
    <name type="ordered locus">SeD_A1073</name>
</gene>
<sequence length="400" mass="45676">MTQFASPVLHSLLDTDAYKLHMQQAVFHHYYDVQVAAEFRCRGDDLLGIYADAIREQVDAMQHLRLQEDEFQWLSGLPFFKPDYLNWLREFRYNPAQVCVTNDNGKLNIRLTGPWREVIMWEVPLLAVISELVHHYRSPNAGVDQALDALESKLVDFTALTANLDMSRFHLMDFGTRRRFSREVQQAIVKRLQQESWFVGTSNYDLARRLALTPMGTQAHEWFQAHQQISPDLATSQRAALAAWLNEYPDQLGIALTDCITMDAFLRDFGIEFASRYQGLRHDSGDPVAWGEKAIAHYEKLGIDPLTKTLVFSDNLDLPKAVELYRHFASRVQLSFGIGTRLTCDIPQVKPLNIVIKLVECNGKPVAKLSDSPGKTICHDKAFVRALRKAFDLPQVRKAS</sequence>
<reference key="1">
    <citation type="journal article" date="2011" name="J. Bacteriol.">
        <title>Comparative genomics of 28 Salmonella enterica isolates: evidence for CRISPR-mediated adaptive sublineage evolution.</title>
        <authorList>
            <person name="Fricke W.F."/>
            <person name="Mammel M.K."/>
            <person name="McDermott P.F."/>
            <person name="Tartera C."/>
            <person name="White D.G."/>
            <person name="Leclerc J.E."/>
            <person name="Ravel J."/>
            <person name="Cebula T.A."/>
        </authorList>
    </citation>
    <scope>NUCLEOTIDE SEQUENCE [LARGE SCALE GENOMIC DNA]</scope>
    <source>
        <strain>CT_02021853</strain>
    </source>
</reference>
<dbReference type="EC" id="6.3.4.21" evidence="1"/>
<dbReference type="EMBL" id="CP001144">
    <property type="protein sequence ID" value="ACH75344.1"/>
    <property type="molecule type" value="Genomic_DNA"/>
</dbReference>
<dbReference type="RefSeq" id="WP_000191404.1">
    <property type="nucleotide sequence ID" value="NC_011205.1"/>
</dbReference>
<dbReference type="SMR" id="B5FQ81"/>
<dbReference type="KEGG" id="sed:SeD_A1073"/>
<dbReference type="HOGENOM" id="CLU_030991_1_0_6"/>
<dbReference type="UniPathway" id="UPA00253">
    <property type="reaction ID" value="UER00457"/>
</dbReference>
<dbReference type="Proteomes" id="UP000008322">
    <property type="component" value="Chromosome"/>
</dbReference>
<dbReference type="GO" id="GO:0005829">
    <property type="term" value="C:cytosol"/>
    <property type="evidence" value="ECO:0007669"/>
    <property type="project" value="TreeGrafter"/>
</dbReference>
<dbReference type="GO" id="GO:0004516">
    <property type="term" value="F:nicotinate phosphoribosyltransferase activity"/>
    <property type="evidence" value="ECO:0007669"/>
    <property type="project" value="UniProtKB-UniRule"/>
</dbReference>
<dbReference type="GO" id="GO:0034355">
    <property type="term" value="P:NAD biosynthetic process via the salvage pathway"/>
    <property type="evidence" value="ECO:0007669"/>
    <property type="project" value="TreeGrafter"/>
</dbReference>
<dbReference type="CDD" id="cd01401">
    <property type="entry name" value="PncB_like"/>
    <property type="match status" value="1"/>
</dbReference>
<dbReference type="FunFam" id="3.20.140.10:FF:000001">
    <property type="entry name" value="Nicotinate phosphoribosyltransferase"/>
    <property type="match status" value="1"/>
</dbReference>
<dbReference type="Gene3D" id="3.20.140.10">
    <property type="entry name" value="nicotinate phosphoribosyltransferase"/>
    <property type="match status" value="1"/>
</dbReference>
<dbReference type="HAMAP" id="MF_00570">
    <property type="entry name" value="NAPRTase"/>
    <property type="match status" value="1"/>
</dbReference>
<dbReference type="InterPro" id="IPR041525">
    <property type="entry name" value="N/Namide_PRibTrfase"/>
</dbReference>
<dbReference type="InterPro" id="IPR040727">
    <property type="entry name" value="NAPRTase_N"/>
</dbReference>
<dbReference type="InterPro" id="IPR006406">
    <property type="entry name" value="Nic_PRibTrfase"/>
</dbReference>
<dbReference type="InterPro" id="IPR007229">
    <property type="entry name" value="Nic_PRibTrfase-Fam"/>
</dbReference>
<dbReference type="InterPro" id="IPR036068">
    <property type="entry name" value="Nicotinate_pribotase-like_C"/>
</dbReference>
<dbReference type="NCBIfam" id="TIGR01514">
    <property type="entry name" value="NAPRTase"/>
    <property type="match status" value="1"/>
</dbReference>
<dbReference type="NCBIfam" id="NF003704">
    <property type="entry name" value="PRK05321.1"/>
    <property type="match status" value="1"/>
</dbReference>
<dbReference type="PANTHER" id="PTHR11098">
    <property type="entry name" value="NICOTINATE PHOSPHORIBOSYLTRANSFERASE"/>
    <property type="match status" value="1"/>
</dbReference>
<dbReference type="PANTHER" id="PTHR11098:SF1">
    <property type="entry name" value="NICOTINATE PHOSPHORIBOSYLTRANSFERASE"/>
    <property type="match status" value="1"/>
</dbReference>
<dbReference type="Pfam" id="PF04095">
    <property type="entry name" value="NAPRTase"/>
    <property type="match status" value="1"/>
</dbReference>
<dbReference type="Pfam" id="PF17767">
    <property type="entry name" value="NAPRTase_N"/>
    <property type="match status" value="1"/>
</dbReference>
<dbReference type="PIRSF" id="PIRSF000484">
    <property type="entry name" value="NAPRT"/>
    <property type="match status" value="1"/>
</dbReference>
<dbReference type="SUPFAM" id="SSF51690">
    <property type="entry name" value="Nicotinate/Quinolinate PRTase C-terminal domain-like"/>
    <property type="match status" value="1"/>
</dbReference>
<dbReference type="SUPFAM" id="SSF54675">
    <property type="entry name" value="Nicotinate/Quinolinate PRTase N-terminal domain-like"/>
    <property type="match status" value="1"/>
</dbReference>
<organism>
    <name type="scientific">Salmonella dublin (strain CT_02021853)</name>
    <dbReference type="NCBI Taxonomy" id="439851"/>
    <lineage>
        <taxon>Bacteria</taxon>
        <taxon>Pseudomonadati</taxon>
        <taxon>Pseudomonadota</taxon>
        <taxon>Gammaproteobacteria</taxon>
        <taxon>Enterobacterales</taxon>
        <taxon>Enterobacteriaceae</taxon>
        <taxon>Salmonella</taxon>
    </lineage>
</organism>
<comment type="function">
    <text evidence="1">Catalyzes the synthesis of beta-nicotinate D-ribonucleotide from nicotinate and 5-phospho-D-ribose 1-phosphate at the expense of ATP.</text>
</comment>
<comment type="catalytic activity">
    <reaction evidence="1">
        <text>nicotinate + 5-phospho-alpha-D-ribose 1-diphosphate + ATP + H2O = nicotinate beta-D-ribonucleotide + ADP + phosphate + diphosphate</text>
        <dbReference type="Rhea" id="RHEA:36163"/>
        <dbReference type="ChEBI" id="CHEBI:15377"/>
        <dbReference type="ChEBI" id="CHEBI:30616"/>
        <dbReference type="ChEBI" id="CHEBI:32544"/>
        <dbReference type="ChEBI" id="CHEBI:33019"/>
        <dbReference type="ChEBI" id="CHEBI:43474"/>
        <dbReference type="ChEBI" id="CHEBI:57502"/>
        <dbReference type="ChEBI" id="CHEBI:58017"/>
        <dbReference type="ChEBI" id="CHEBI:456216"/>
        <dbReference type="EC" id="6.3.4.21"/>
    </reaction>
</comment>
<comment type="pathway">
    <text evidence="1">Cofactor biosynthesis; NAD(+) biosynthesis; nicotinate D-ribonucleotide from nicotinate: step 1/1.</text>
</comment>
<comment type="PTM">
    <text evidence="1">Transiently phosphorylated on a His residue during the reaction cycle. Phosphorylation strongly increases the affinity for substrates and increases the rate of nicotinate D-ribonucleotide production. Dephosphorylation regenerates the low-affinity form of the enzyme, leading to product release.</text>
</comment>
<comment type="similarity">
    <text evidence="1">Belongs to the NAPRTase family.</text>
</comment>
<name>PNCB_SALDC</name>
<keyword id="KW-0436">Ligase</keyword>
<keyword id="KW-0597">Phosphoprotein</keyword>
<keyword id="KW-0662">Pyridine nucleotide biosynthesis</keyword>
<accession>B5FQ81</accession>
<protein>
    <recommendedName>
        <fullName evidence="1">Nicotinate phosphoribosyltransferase</fullName>
        <shortName evidence="1">NAPRTase</shortName>
        <ecNumber evidence="1">6.3.4.21</ecNumber>
    </recommendedName>
</protein>
<evidence type="ECO:0000255" key="1">
    <source>
        <dbReference type="HAMAP-Rule" id="MF_00570"/>
    </source>
</evidence>